<feature type="chain" id="PRO_1000189800" description="Chromosomal replication initiator protein DnaA">
    <location>
        <begin position="1"/>
        <end position="451"/>
    </location>
</feature>
<feature type="region of interest" description="Domain I, interacts with DnaA modulators" evidence="1">
    <location>
        <begin position="1"/>
        <end position="72"/>
    </location>
</feature>
<feature type="region of interest" description="Domain II" evidence="1">
    <location>
        <begin position="72"/>
        <end position="108"/>
    </location>
</feature>
<feature type="region of interest" description="Domain III, AAA+ region" evidence="1">
    <location>
        <begin position="109"/>
        <end position="325"/>
    </location>
</feature>
<feature type="region of interest" description="Domain IV, binds dsDNA" evidence="1">
    <location>
        <begin position="326"/>
        <end position="451"/>
    </location>
</feature>
<feature type="binding site" evidence="1">
    <location>
        <position position="153"/>
    </location>
    <ligand>
        <name>ATP</name>
        <dbReference type="ChEBI" id="CHEBI:30616"/>
    </ligand>
</feature>
<feature type="binding site" evidence="1">
    <location>
        <position position="155"/>
    </location>
    <ligand>
        <name>ATP</name>
        <dbReference type="ChEBI" id="CHEBI:30616"/>
    </ligand>
</feature>
<feature type="binding site" evidence="1">
    <location>
        <position position="156"/>
    </location>
    <ligand>
        <name>ATP</name>
        <dbReference type="ChEBI" id="CHEBI:30616"/>
    </ligand>
</feature>
<feature type="binding site" evidence="1">
    <location>
        <position position="157"/>
    </location>
    <ligand>
        <name>ATP</name>
        <dbReference type="ChEBI" id="CHEBI:30616"/>
    </ligand>
</feature>
<keyword id="KW-0067">ATP-binding</keyword>
<keyword id="KW-0963">Cytoplasm</keyword>
<keyword id="KW-0235">DNA replication</keyword>
<keyword id="KW-0238">DNA-binding</keyword>
<keyword id="KW-0446">Lipid-binding</keyword>
<keyword id="KW-0547">Nucleotide-binding</keyword>
<protein>
    <recommendedName>
        <fullName evidence="1">Chromosomal replication initiator protein DnaA</fullName>
    </recommendedName>
</protein>
<dbReference type="EMBL" id="CP001175">
    <property type="protein sequence ID" value="ACK40998.1"/>
    <property type="molecule type" value="Genomic_DNA"/>
</dbReference>
<dbReference type="RefSeq" id="WP_003727573.1">
    <property type="nucleotide sequence ID" value="NC_011660.1"/>
</dbReference>
<dbReference type="SMR" id="B8DAQ9"/>
<dbReference type="GeneID" id="93237900"/>
<dbReference type="KEGG" id="lmh:LMHCC_2663"/>
<dbReference type="HOGENOM" id="CLU_026910_3_1_9"/>
<dbReference type="GO" id="GO:0005737">
    <property type="term" value="C:cytoplasm"/>
    <property type="evidence" value="ECO:0007669"/>
    <property type="project" value="UniProtKB-SubCell"/>
</dbReference>
<dbReference type="GO" id="GO:0005886">
    <property type="term" value="C:plasma membrane"/>
    <property type="evidence" value="ECO:0007669"/>
    <property type="project" value="TreeGrafter"/>
</dbReference>
<dbReference type="GO" id="GO:0005524">
    <property type="term" value="F:ATP binding"/>
    <property type="evidence" value="ECO:0007669"/>
    <property type="project" value="UniProtKB-UniRule"/>
</dbReference>
<dbReference type="GO" id="GO:0016887">
    <property type="term" value="F:ATP hydrolysis activity"/>
    <property type="evidence" value="ECO:0007669"/>
    <property type="project" value="InterPro"/>
</dbReference>
<dbReference type="GO" id="GO:0003688">
    <property type="term" value="F:DNA replication origin binding"/>
    <property type="evidence" value="ECO:0007669"/>
    <property type="project" value="UniProtKB-UniRule"/>
</dbReference>
<dbReference type="GO" id="GO:0008289">
    <property type="term" value="F:lipid binding"/>
    <property type="evidence" value="ECO:0007669"/>
    <property type="project" value="UniProtKB-KW"/>
</dbReference>
<dbReference type="GO" id="GO:0006270">
    <property type="term" value="P:DNA replication initiation"/>
    <property type="evidence" value="ECO:0007669"/>
    <property type="project" value="UniProtKB-UniRule"/>
</dbReference>
<dbReference type="GO" id="GO:0006275">
    <property type="term" value="P:regulation of DNA replication"/>
    <property type="evidence" value="ECO:0007669"/>
    <property type="project" value="UniProtKB-UniRule"/>
</dbReference>
<dbReference type="CDD" id="cd00009">
    <property type="entry name" value="AAA"/>
    <property type="match status" value="1"/>
</dbReference>
<dbReference type="CDD" id="cd06571">
    <property type="entry name" value="Bac_DnaA_C"/>
    <property type="match status" value="1"/>
</dbReference>
<dbReference type="FunFam" id="1.10.1750.10:FF:000003">
    <property type="entry name" value="Chromosomal replication initiator protein DnaA"/>
    <property type="match status" value="1"/>
</dbReference>
<dbReference type="FunFam" id="1.10.8.60:FF:000003">
    <property type="entry name" value="Chromosomal replication initiator protein DnaA"/>
    <property type="match status" value="1"/>
</dbReference>
<dbReference type="FunFam" id="3.40.50.300:FF:000150">
    <property type="entry name" value="Chromosomal replication initiator protein DnaA"/>
    <property type="match status" value="1"/>
</dbReference>
<dbReference type="Gene3D" id="1.10.1750.10">
    <property type="match status" value="1"/>
</dbReference>
<dbReference type="Gene3D" id="1.10.8.60">
    <property type="match status" value="1"/>
</dbReference>
<dbReference type="Gene3D" id="3.30.300.180">
    <property type="match status" value="1"/>
</dbReference>
<dbReference type="Gene3D" id="3.40.50.300">
    <property type="entry name" value="P-loop containing nucleotide triphosphate hydrolases"/>
    <property type="match status" value="1"/>
</dbReference>
<dbReference type="HAMAP" id="MF_00377">
    <property type="entry name" value="DnaA_bact"/>
    <property type="match status" value="1"/>
</dbReference>
<dbReference type="InterPro" id="IPR003593">
    <property type="entry name" value="AAA+_ATPase"/>
</dbReference>
<dbReference type="InterPro" id="IPR001957">
    <property type="entry name" value="Chromosome_initiator_DnaA"/>
</dbReference>
<dbReference type="InterPro" id="IPR020591">
    <property type="entry name" value="Chromosome_initiator_DnaA-like"/>
</dbReference>
<dbReference type="InterPro" id="IPR018312">
    <property type="entry name" value="Chromosome_initiator_DnaA_CS"/>
</dbReference>
<dbReference type="InterPro" id="IPR013159">
    <property type="entry name" value="DnaA_C"/>
</dbReference>
<dbReference type="InterPro" id="IPR013317">
    <property type="entry name" value="DnaA_dom"/>
</dbReference>
<dbReference type="InterPro" id="IPR024633">
    <property type="entry name" value="DnaA_N_dom"/>
</dbReference>
<dbReference type="InterPro" id="IPR038454">
    <property type="entry name" value="DnaA_N_sf"/>
</dbReference>
<dbReference type="InterPro" id="IPR027417">
    <property type="entry name" value="P-loop_NTPase"/>
</dbReference>
<dbReference type="InterPro" id="IPR010921">
    <property type="entry name" value="Trp_repressor/repl_initiator"/>
</dbReference>
<dbReference type="NCBIfam" id="TIGR00362">
    <property type="entry name" value="DnaA"/>
    <property type="match status" value="1"/>
</dbReference>
<dbReference type="NCBIfam" id="NF010686">
    <property type="entry name" value="PRK14086.1"/>
    <property type="match status" value="1"/>
</dbReference>
<dbReference type="PANTHER" id="PTHR30050">
    <property type="entry name" value="CHROMOSOMAL REPLICATION INITIATOR PROTEIN DNAA"/>
    <property type="match status" value="1"/>
</dbReference>
<dbReference type="PANTHER" id="PTHR30050:SF2">
    <property type="entry name" value="CHROMOSOMAL REPLICATION INITIATOR PROTEIN DNAA"/>
    <property type="match status" value="1"/>
</dbReference>
<dbReference type="Pfam" id="PF00308">
    <property type="entry name" value="Bac_DnaA"/>
    <property type="match status" value="1"/>
</dbReference>
<dbReference type="Pfam" id="PF08299">
    <property type="entry name" value="Bac_DnaA_C"/>
    <property type="match status" value="1"/>
</dbReference>
<dbReference type="Pfam" id="PF11638">
    <property type="entry name" value="DnaA_N"/>
    <property type="match status" value="1"/>
</dbReference>
<dbReference type="PRINTS" id="PR00051">
    <property type="entry name" value="DNAA"/>
</dbReference>
<dbReference type="SMART" id="SM00382">
    <property type="entry name" value="AAA"/>
    <property type="match status" value="1"/>
</dbReference>
<dbReference type="SMART" id="SM00760">
    <property type="entry name" value="Bac_DnaA_C"/>
    <property type="match status" value="1"/>
</dbReference>
<dbReference type="SUPFAM" id="SSF52540">
    <property type="entry name" value="P-loop containing nucleoside triphosphate hydrolases"/>
    <property type="match status" value="1"/>
</dbReference>
<dbReference type="SUPFAM" id="SSF48295">
    <property type="entry name" value="TrpR-like"/>
    <property type="match status" value="1"/>
</dbReference>
<dbReference type="PROSITE" id="PS01008">
    <property type="entry name" value="DNAA"/>
    <property type="match status" value="1"/>
</dbReference>
<proteinExistence type="inferred from homology"/>
<name>DNAA_LISMH</name>
<accession>B8DAQ9</accession>
<gene>
    <name evidence="1" type="primary">dnaA</name>
    <name type="ordered locus">LMHCC_2663</name>
</gene>
<reference key="1">
    <citation type="journal article" date="2011" name="J. Bacteriol.">
        <title>Genome sequence of lineage III Listeria monocytogenes strain HCC23.</title>
        <authorList>
            <person name="Steele C.L."/>
            <person name="Donaldson J.R."/>
            <person name="Paul D."/>
            <person name="Banes M.M."/>
            <person name="Arick T."/>
            <person name="Bridges S.M."/>
            <person name="Lawrence M.L."/>
        </authorList>
    </citation>
    <scope>NUCLEOTIDE SEQUENCE [LARGE SCALE GENOMIC DNA]</scope>
    <source>
        <strain>HCC23</strain>
    </source>
</reference>
<comment type="function">
    <text evidence="1">Plays an essential role in the initiation and regulation of chromosomal replication. ATP-DnaA binds to the origin of replication (oriC) to initiate formation of the DNA replication initiation complex once per cell cycle. Binds the DnaA box (a 9 base pair repeat at the origin) and separates the double-stranded (ds)DNA. Forms a right-handed helical filament on oriC DNA; dsDNA binds to the exterior of the filament while single-stranded (ss)DNA is stabiized in the filament's interior. The ATP-DnaA-oriC complex binds and stabilizes one strand of the AT-rich DNA unwinding element (DUE), permitting loading of DNA polymerase. After initiation quickly degrades to an ADP-DnaA complex that is not apt for DNA replication. Binds acidic phospholipids.</text>
</comment>
<comment type="subunit">
    <text evidence="1">Oligomerizes as a right-handed, spiral filament on DNA at oriC.</text>
</comment>
<comment type="subcellular location">
    <subcellularLocation>
        <location evidence="1">Cytoplasm</location>
    </subcellularLocation>
</comment>
<comment type="domain">
    <text evidence="1">Domain I is involved in oligomerization and binding regulators, domain II is flexibile and of varying length in different bacteria, domain III forms the AAA+ region, while domain IV binds dsDNA.</text>
</comment>
<comment type="similarity">
    <text evidence="1">Belongs to the DnaA family.</text>
</comment>
<organism>
    <name type="scientific">Listeria monocytogenes serotype 4a (strain HCC23)</name>
    <dbReference type="NCBI Taxonomy" id="552536"/>
    <lineage>
        <taxon>Bacteria</taxon>
        <taxon>Bacillati</taxon>
        <taxon>Bacillota</taxon>
        <taxon>Bacilli</taxon>
        <taxon>Bacillales</taxon>
        <taxon>Listeriaceae</taxon>
        <taxon>Listeria</taxon>
    </lineage>
</organism>
<sequence>MQSIEDIWQETLQIVKKNMSKPSYDTWMKSTTAHSLEGNTFIISAPNNFVRDWLEKSYTQFIANILQEITGRLFDVRFIDGEQEENFEYTVIKPNPALDEDGIEIGKHMLNPRYVFDTFVIGSGNRFAHAASLAVAEAPAKAYNPLFIYGGVGLGKTHLMHAVGHYVQQHKDNAKVMYLSSEKFTNEFISSIRDNKTEEFRTKYRNVDVLLIDDIQFLAGKEGTQEEFFHTFNTLYDEQKQIIISSDRPPKEIPTLEDRLRSRFEWGLITDITPPDLETRIAILRKKAKADGLDIPNEVMLYIANQIDSNIRELEGALIRVVAYSSLVNKDITAGLAAEALKDIIPSSKSQVITISGIQEAVGEYFHVRLEDFKAKKRTKSIAFPRQIAMYLSRELTDASLPKIGDEFGGRDHTTVIHAHEKISQLLKTDQVLKNDLAEIEKNLRKAQNMF</sequence>
<evidence type="ECO:0000255" key="1">
    <source>
        <dbReference type="HAMAP-Rule" id="MF_00377"/>
    </source>
</evidence>